<name>PYRH_BURO1</name>
<evidence type="ECO:0000255" key="1">
    <source>
        <dbReference type="HAMAP-Rule" id="MF_01220"/>
    </source>
</evidence>
<organism>
    <name type="scientific">Burkholderia orbicola (strain AU 1054)</name>
    <dbReference type="NCBI Taxonomy" id="331271"/>
    <lineage>
        <taxon>Bacteria</taxon>
        <taxon>Pseudomonadati</taxon>
        <taxon>Pseudomonadota</taxon>
        <taxon>Betaproteobacteria</taxon>
        <taxon>Burkholderiales</taxon>
        <taxon>Burkholderiaceae</taxon>
        <taxon>Burkholderia</taxon>
        <taxon>Burkholderia cepacia complex</taxon>
        <taxon>Burkholderia orbicola</taxon>
    </lineage>
</organism>
<feature type="chain" id="PRO_0000323805" description="Uridylate kinase">
    <location>
        <begin position="1"/>
        <end position="237"/>
    </location>
</feature>
<feature type="binding site" evidence="1">
    <location>
        <begin position="11"/>
        <end position="14"/>
    </location>
    <ligand>
        <name>ATP</name>
        <dbReference type="ChEBI" id="CHEBI:30616"/>
    </ligand>
</feature>
<feature type="binding site" evidence="1">
    <location>
        <position position="53"/>
    </location>
    <ligand>
        <name>UMP</name>
        <dbReference type="ChEBI" id="CHEBI:57865"/>
    </ligand>
</feature>
<feature type="binding site" evidence="1">
    <location>
        <position position="54"/>
    </location>
    <ligand>
        <name>ATP</name>
        <dbReference type="ChEBI" id="CHEBI:30616"/>
    </ligand>
</feature>
<feature type="binding site" evidence="1">
    <location>
        <position position="58"/>
    </location>
    <ligand>
        <name>ATP</name>
        <dbReference type="ChEBI" id="CHEBI:30616"/>
    </ligand>
</feature>
<feature type="binding site" evidence="1">
    <location>
        <position position="73"/>
    </location>
    <ligand>
        <name>UMP</name>
        <dbReference type="ChEBI" id="CHEBI:57865"/>
    </ligand>
</feature>
<feature type="binding site" evidence="1">
    <location>
        <begin position="134"/>
        <end position="141"/>
    </location>
    <ligand>
        <name>UMP</name>
        <dbReference type="ChEBI" id="CHEBI:57865"/>
    </ligand>
</feature>
<feature type="binding site" evidence="1">
    <location>
        <position position="161"/>
    </location>
    <ligand>
        <name>ATP</name>
        <dbReference type="ChEBI" id="CHEBI:30616"/>
    </ligand>
</feature>
<feature type="binding site" evidence="1">
    <location>
        <position position="167"/>
    </location>
    <ligand>
        <name>ATP</name>
        <dbReference type="ChEBI" id="CHEBI:30616"/>
    </ligand>
</feature>
<feature type="binding site" evidence="1">
    <location>
        <position position="170"/>
    </location>
    <ligand>
        <name>ATP</name>
        <dbReference type="ChEBI" id="CHEBI:30616"/>
    </ligand>
</feature>
<protein>
    <recommendedName>
        <fullName evidence="1">Uridylate kinase</fullName>
        <shortName evidence="1">UK</shortName>
        <ecNumber evidence="1">2.7.4.22</ecNumber>
    </recommendedName>
    <alternativeName>
        <fullName evidence="1">Uridine monophosphate kinase</fullName>
        <shortName evidence="1">UMP kinase</shortName>
        <shortName evidence="1">UMPK</shortName>
    </alternativeName>
</protein>
<sequence length="237" mass="25390">MSNAYKRVLLKLSGEALMGDDAFGINRATIERMVADIAEVVRLGTQLAVVIGGGNIFRGVAGGAAGMDRATADYMGMLATMMNALALQDAMRHAGIEARVQSALRMDQVVEPYIRPRAIRQLEEGRVVIFAAGTGNPFFTTDTAAALRGSEVGAEVVLKATKVDGVYSADPKKDPSATRYTTISFDEAISRNLQVMDATAFALCRDQKLPIRVFSINKPGALKRIVLGEDEGTLVHV</sequence>
<accession>Q1BHI0</accession>
<gene>
    <name evidence="1" type="primary">pyrH</name>
    <name type="ordered locus">Bcen_6060</name>
</gene>
<proteinExistence type="inferred from homology"/>
<reference key="1">
    <citation type="submission" date="2006-05" db="EMBL/GenBank/DDBJ databases">
        <title>Complete sequence of chromosome 3 of Burkholderia cenocepacia AU 1054.</title>
        <authorList>
            <consortium name="US DOE Joint Genome Institute"/>
            <person name="Copeland A."/>
            <person name="Lucas S."/>
            <person name="Lapidus A."/>
            <person name="Barry K."/>
            <person name="Detter J.C."/>
            <person name="Glavina del Rio T."/>
            <person name="Hammon N."/>
            <person name="Israni S."/>
            <person name="Dalin E."/>
            <person name="Tice H."/>
            <person name="Pitluck S."/>
            <person name="Chain P."/>
            <person name="Malfatti S."/>
            <person name="Shin M."/>
            <person name="Vergez L."/>
            <person name="Schmutz J."/>
            <person name="Larimer F."/>
            <person name="Land M."/>
            <person name="Hauser L."/>
            <person name="Kyrpides N."/>
            <person name="Lykidis A."/>
            <person name="LiPuma J.J."/>
            <person name="Konstantinidis K."/>
            <person name="Tiedje J.M."/>
            <person name="Richardson P."/>
        </authorList>
    </citation>
    <scope>NUCLEOTIDE SEQUENCE [LARGE SCALE GENOMIC DNA]</scope>
    <source>
        <strain>AU 1054</strain>
    </source>
</reference>
<dbReference type="EC" id="2.7.4.22" evidence="1"/>
<dbReference type="EMBL" id="CP000380">
    <property type="protein sequence ID" value="ABF80925.1"/>
    <property type="molecule type" value="Genomic_DNA"/>
</dbReference>
<dbReference type="SMR" id="Q1BHI0"/>
<dbReference type="HOGENOM" id="CLU_033861_0_0_4"/>
<dbReference type="UniPathway" id="UPA00159">
    <property type="reaction ID" value="UER00275"/>
</dbReference>
<dbReference type="GO" id="GO:0005829">
    <property type="term" value="C:cytosol"/>
    <property type="evidence" value="ECO:0007669"/>
    <property type="project" value="TreeGrafter"/>
</dbReference>
<dbReference type="GO" id="GO:0005524">
    <property type="term" value="F:ATP binding"/>
    <property type="evidence" value="ECO:0007669"/>
    <property type="project" value="UniProtKB-KW"/>
</dbReference>
<dbReference type="GO" id="GO:0033862">
    <property type="term" value="F:UMP kinase activity"/>
    <property type="evidence" value="ECO:0007669"/>
    <property type="project" value="UniProtKB-EC"/>
</dbReference>
<dbReference type="GO" id="GO:0044210">
    <property type="term" value="P:'de novo' CTP biosynthetic process"/>
    <property type="evidence" value="ECO:0007669"/>
    <property type="project" value="UniProtKB-UniRule"/>
</dbReference>
<dbReference type="GO" id="GO:0006225">
    <property type="term" value="P:UDP biosynthetic process"/>
    <property type="evidence" value="ECO:0007669"/>
    <property type="project" value="TreeGrafter"/>
</dbReference>
<dbReference type="CDD" id="cd04254">
    <property type="entry name" value="AAK_UMPK-PyrH-Ec"/>
    <property type="match status" value="1"/>
</dbReference>
<dbReference type="FunFam" id="3.40.1160.10:FF:000001">
    <property type="entry name" value="Uridylate kinase"/>
    <property type="match status" value="1"/>
</dbReference>
<dbReference type="Gene3D" id="3.40.1160.10">
    <property type="entry name" value="Acetylglutamate kinase-like"/>
    <property type="match status" value="1"/>
</dbReference>
<dbReference type="HAMAP" id="MF_01220_B">
    <property type="entry name" value="PyrH_B"/>
    <property type="match status" value="1"/>
</dbReference>
<dbReference type="InterPro" id="IPR036393">
    <property type="entry name" value="AceGlu_kinase-like_sf"/>
</dbReference>
<dbReference type="InterPro" id="IPR001048">
    <property type="entry name" value="Asp/Glu/Uridylate_kinase"/>
</dbReference>
<dbReference type="InterPro" id="IPR011817">
    <property type="entry name" value="Uridylate_kinase"/>
</dbReference>
<dbReference type="InterPro" id="IPR015963">
    <property type="entry name" value="Uridylate_kinase_bac"/>
</dbReference>
<dbReference type="NCBIfam" id="TIGR02075">
    <property type="entry name" value="pyrH_bact"/>
    <property type="match status" value="1"/>
</dbReference>
<dbReference type="PANTHER" id="PTHR42833">
    <property type="entry name" value="URIDYLATE KINASE"/>
    <property type="match status" value="1"/>
</dbReference>
<dbReference type="PANTHER" id="PTHR42833:SF4">
    <property type="entry name" value="URIDYLATE KINASE PUMPKIN, CHLOROPLASTIC"/>
    <property type="match status" value="1"/>
</dbReference>
<dbReference type="Pfam" id="PF00696">
    <property type="entry name" value="AA_kinase"/>
    <property type="match status" value="1"/>
</dbReference>
<dbReference type="PIRSF" id="PIRSF005650">
    <property type="entry name" value="Uridylate_kin"/>
    <property type="match status" value="1"/>
</dbReference>
<dbReference type="SUPFAM" id="SSF53633">
    <property type="entry name" value="Carbamate kinase-like"/>
    <property type="match status" value="1"/>
</dbReference>
<comment type="function">
    <text evidence="1">Catalyzes the reversible phosphorylation of UMP to UDP.</text>
</comment>
<comment type="catalytic activity">
    <reaction evidence="1">
        <text>UMP + ATP = UDP + ADP</text>
        <dbReference type="Rhea" id="RHEA:24400"/>
        <dbReference type="ChEBI" id="CHEBI:30616"/>
        <dbReference type="ChEBI" id="CHEBI:57865"/>
        <dbReference type="ChEBI" id="CHEBI:58223"/>
        <dbReference type="ChEBI" id="CHEBI:456216"/>
        <dbReference type="EC" id="2.7.4.22"/>
    </reaction>
</comment>
<comment type="activity regulation">
    <text evidence="1">Inhibited by UTP.</text>
</comment>
<comment type="pathway">
    <text evidence="1">Pyrimidine metabolism; CTP biosynthesis via de novo pathway; UDP from UMP (UMPK route): step 1/1.</text>
</comment>
<comment type="subunit">
    <text evidence="1">Homohexamer.</text>
</comment>
<comment type="subcellular location">
    <subcellularLocation>
        <location evidence="1">Cytoplasm</location>
    </subcellularLocation>
</comment>
<comment type="similarity">
    <text evidence="1">Belongs to the UMP kinase family.</text>
</comment>
<keyword id="KW-0067">ATP-binding</keyword>
<keyword id="KW-0963">Cytoplasm</keyword>
<keyword id="KW-0418">Kinase</keyword>
<keyword id="KW-0547">Nucleotide-binding</keyword>
<keyword id="KW-0665">Pyrimidine biosynthesis</keyword>
<keyword id="KW-0808">Transferase</keyword>